<gene>
    <name evidence="1" type="primary">nqrE</name>
    <name type="ordered locus">PA2995</name>
</gene>
<comment type="function">
    <text evidence="1">NQR complex catalyzes the reduction of ubiquinone-1 to ubiquinol by two successive reactions, coupled with the transport of Na(+) ions from the cytoplasm to the periplasm. NqrA to NqrE are probably involved in the second step, the conversion of ubisemiquinone to ubiquinol.</text>
</comment>
<comment type="catalytic activity">
    <reaction evidence="1">
        <text>a ubiquinone + n Na(+)(in) + NADH + H(+) = a ubiquinol + n Na(+)(out) + NAD(+)</text>
        <dbReference type="Rhea" id="RHEA:47748"/>
        <dbReference type="Rhea" id="RHEA-COMP:9565"/>
        <dbReference type="Rhea" id="RHEA-COMP:9566"/>
        <dbReference type="ChEBI" id="CHEBI:15378"/>
        <dbReference type="ChEBI" id="CHEBI:16389"/>
        <dbReference type="ChEBI" id="CHEBI:17976"/>
        <dbReference type="ChEBI" id="CHEBI:29101"/>
        <dbReference type="ChEBI" id="CHEBI:57540"/>
        <dbReference type="ChEBI" id="CHEBI:57945"/>
        <dbReference type="EC" id="7.2.1.1"/>
    </reaction>
</comment>
<comment type="subunit">
    <text evidence="1">Composed of six subunits; NqrA, NqrB, NqrC, NqrD, NqrE and NqrF.</text>
</comment>
<comment type="subcellular location">
    <subcellularLocation>
        <location evidence="1">Cell inner membrane</location>
        <topology evidence="1">Multi-pass membrane protein</topology>
    </subcellularLocation>
</comment>
<comment type="similarity">
    <text evidence="1">Belongs to the NqrDE/RnfAE family.</text>
</comment>
<dbReference type="EC" id="7.2.1.1" evidence="1"/>
<dbReference type="EMBL" id="AE004091">
    <property type="protein sequence ID" value="AAG06383.1"/>
    <property type="molecule type" value="Genomic_DNA"/>
</dbReference>
<dbReference type="PIR" id="D83272">
    <property type="entry name" value="D83272"/>
</dbReference>
<dbReference type="RefSeq" id="NP_251685.1">
    <property type="nucleotide sequence ID" value="NC_002516.2"/>
</dbReference>
<dbReference type="RefSeq" id="WP_003091182.1">
    <property type="nucleotide sequence ID" value="NZ_QZGE01000009.1"/>
</dbReference>
<dbReference type="SMR" id="Q9HZL0"/>
<dbReference type="STRING" id="208964.PA2995"/>
<dbReference type="PaxDb" id="208964-PA2995"/>
<dbReference type="DNASU" id="880456"/>
<dbReference type="GeneID" id="77220513"/>
<dbReference type="GeneID" id="880456"/>
<dbReference type="KEGG" id="pae:PA2995"/>
<dbReference type="PATRIC" id="fig|208964.12.peg.3143"/>
<dbReference type="PseudoCAP" id="PA2995"/>
<dbReference type="HOGENOM" id="CLU_095255_0_0_6"/>
<dbReference type="InParanoid" id="Q9HZL0"/>
<dbReference type="OrthoDB" id="9803631at2"/>
<dbReference type="PhylomeDB" id="Q9HZL0"/>
<dbReference type="BioCyc" id="PAER208964:G1FZ6-3047-MONOMER"/>
<dbReference type="PHI-base" id="PHI:8941"/>
<dbReference type="Proteomes" id="UP000002438">
    <property type="component" value="Chromosome"/>
</dbReference>
<dbReference type="GO" id="GO:0009276">
    <property type="term" value="C:Gram-negative-bacterium-type cell wall"/>
    <property type="evidence" value="ECO:0007669"/>
    <property type="project" value="InterPro"/>
</dbReference>
<dbReference type="GO" id="GO:0005886">
    <property type="term" value="C:plasma membrane"/>
    <property type="evidence" value="ECO:0000318"/>
    <property type="project" value="GO_Central"/>
</dbReference>
<dbReference type="GO" id="GO:0016655">
    <property type="term" value="F:oxidoreductase activity, acting on NAD(P)H, quinone or similar compound as acceptor"/>
    <property type="evidence" value="ECO:0007669"/>
    <property type="project" value="UniProtKB-UniRule"/>
</dbReference>
<dbReference type="GO" id="GO:0022904">
    <property type="term" value="P:respiratory electron transport chain"/>
    <property type="evidence" value="ECO:0007669"/>
    <property type="project" value="InterPro"/>
</dbReference>
<dbReference type="GO" id="GO:0006814">
    <property type="term" value="P:sodium ion transport"/>
    <property type="evidence" value="ECO:0007669"/>
    <property type="project" value="UniProtKB-UniRule"/>
</dbReference>
<dbReference type="HAMAP" id="MF_00429">
    <property type="entry name" value="NqrE"/>
    <property type="match status" value="1"/>
</dbReference>
<dbReference type="InterPro" id="IPR003667">
    <property type="entry name" value="NqrDE/RnfAE"/>
</dbReference>
<dbReference type="InterPro" id="IPR050133">
    <property type="entry name" value="NqrDE/RnfAE_oxidrdctase"/>
</dbReference>
<dbReference type="InterPro" id="IPR010967">
    <property type="entry name" value="NqrE"/>
</dbReference>
<dbReference type="NCBIfam" id="TIGR01940">
    <property type="entry name" value="nqrE"/>
    <property type="match status" value="1"/>
</dbReference>
<dbReference type="PANTHER" id="PTHR30335">
    <property type="entry name" value="INTEGRAL MEMBRANE PROTEIN OF SOXR-REDUCING COMPLEX"/>
    <property type="match status" value="1"/>
</dbReference>
<dbReference type="PANTHER" id="PTHR30335:SF1">
    <property type="entry name" value="NA(+)-TRANSLOCATING NADH-QUINONE REDUCTASE SUBUNIT E"/>
    <property type="match status" value="1"/>
</dbReference>
<dbReference type="Pfam" id="PF02508">
    <property type="entry name" value="Rnf-Nqr"/>
    <property type="match status" value="1"/>
</dbReference>
<dbReference type="PIRSF" id="PIRSF006102">
    <property type="entry name" value="NQR_DE"/>
    <property type="match status" value="1"/>
</dbReference>
<name>NQRE_PSEAE</name>
<sequence>MEHYISLFVKAVFVENMALAFFLGMCTFIAISKKVETAIGLGIAVIVVQTITVPANNLIYTYLLKDGALAWAGLPEVDLSFLGLLSYIGVIAAIVQILEMLLDKYVPSLYNALGVFLPLITVNCAIMAGSLFMVERDYNLAESTVYGVGSGFSWALAIAALAGIREKLKYSDVPEGLQGLGITFITIGLMSLGFMSFSGVQL</sequence>
<reference key="1">
    <citation type="journal article" date="2000" name="Nature">
        <title>Complete genome sequence of Pseudomonas aeruginosa PAO1, an opportunistic pathogen.</title>
        <authorList>
            <person name="Stover C.K."/>
            <person name="Pham X.-Q.T."/>
            <person name="Erwin A.L."/>
            <person name="Mizoguchi S.D."/>
            <person name="Warrener P."/>
            <person name="Hickey M.J."/>
            <person name="Brinkman F.S.L."/>
            <person name="Hufnagle W.O."/>
            <person name="Kowalik D.J."/>
            <person name="Lagrou M."/>
            <person name="Garber R.L."/>
            <person name="Goltry L."/>
            <person name="Tolentino E."/>
            <person name="Westbrock-Wadman S."/>
            <person name="Yuan Y."/>
            <person name="Brody L.L."/>
            <person name="Coulter S.N."/>
            <person name="Folger K.R."/>
            <person name="Kas A."/>
            <person name="Larbig K."/>
            <person name="Lim R.M."/>
            <person name="Smith K.A."/>
            <person name="Spencer D.H."/>
            <person name="Wong G.K.-S."/>
            <person name="Wu Z."/>
            <person name="Paulsen I.T."/>
            <person name="Reizer J."/>
            <person name="Saier M.H. Jr."/>
            <person name="Hancock R.E.W."/>
            <person name="Lory S."/>
            <person name="Olson M.V."/>
        </authorList>
    </citation>
    <scope>NUCLEOTIDE SEQUENCE [LARGE SCALE GENOMIC DNA]</scope>
    <source>
        <strain>ATCC 15692 / DSM 22644 / CIP 104116 / JCM 14847 / LMG 12228 / 1C / PRS 101 / PAO1</strain>
    </source>
</reference>
<organism>
    <name type="scientific">Pseudomonas aeruginosa (strain ATCC 15692 / DSM 22644 / CIP 104116 / JCM 14847 / LMG 12228 / 1C / PRS 101 / PAO1)</name>
    <dbReference type="NCBI Taxonomy" id="208964"/>
    <lineage>
        <taxon>Bacteria</taxon>
        <taxon>Pseudomonadati</taxon>
        <taxon>Pseudomonadota</taxon>
        <taxon>Gammaproteobacteria</taxon>
        <taxon>Pseudomonadales</taxon>
        <taxon>Pseudomonadaceae</taxon>
        <taxon>Pseudomonas</taxon>
    </lineage>
</organism>
<feature type="chain" id="PRO_0000214256" description="Na(+)-translocating NADH-quinone reductase subunit E">
    <location>
        <begin position="1"/>
        <end position="202"/>
    </location>
</feature>
<feature type="transmembrane region" description="Helical" evidence="1">
    <location>
        <begin position="11"/>
        <end position="31"/>
    </location>
</feature>
<feature type="transmembrane region" description="Helical" evidence="1">
    <location>
        <begin position="35"/>
        <end position="55"/>
    </location>
</feature>
<feature type="transmembrane region" description="Helical" evidence="1">
    <location>
        <begin position="81"/>
        <end position="101"/>
    </location>
</feature>
<feature type="transmembrane region" description="Helical" evidence="1">
    <location>
        <begin position="114"/>
        <end position="134"/>
    </location>
</feature>
<feature type="transmembrane region" description="Helical" evidence="1">
    <location>
        <begin position="144"/>
        <end position="164"/>
    </location>
</feature>
<feature type="transmembrane region" description="Helical" evidence="1">
    <location>
        <begin position="180"/>
        <end position="200"/>
    </location>
</feature>
<protein>
    <recommendedName>
        <fullName evidence="1">Na(+)-translocating NADH-quinone reductase subunit E</fullName>
        <shortName evidence="1">Na(+)-NQR subunit E</shortName>
        <shortName evidence="1">Na(+)-translocating NQR subunit E</shortName>
        <ecNumber evidence="1">7.2.1.1</ecNumber>
    </recommendedName>
    <alternativeName>
        <fullName evidence="1">NQR complex subunit E</fullName>
    </alternativeName>
    <alternativeName>
        <fullName evidence="1">NQR-1 subunit E</fullName>
    </alternativeName>
</protein>
<evidence type="ECO:0000255" key="1">
    <source>
        <dbReference type="HAMAP-Rule" id="MF_00429"/>
    </source>
</evidence>
<accession>Q9HZL0</accession>
<keyword id="KW-0997">Cell inner membrane</keyword>
<keyword id="KW-1003">Cell membrane</keyword>
<keyword id="KW-0406">Ion transport</keyword>
<keyword id="KW-0472">Membrane</keyword>
<keyword id="KW-0520">NAD</keyword>
<keyword id="KW-1185">Reference proteome</keyword>
<keyword id="KW-0915">Sodium</keyword>
<keyword id="KW-0739">Sodium transport</keyword>
<keyword id="KW-1278">Translocase</keyword>
<keyword id="KW-0812">Transmembrane</keyword>
<keyword id="KW-1133">Transmembrane helix</keyword>
<keyword id="KW-0813">Transport</keyword>
<keyword id="KW-0830">Ubiquinone</keyword>
<proteinExistence type="inferred from homology"/>